<keyword id="KW-0028">Amino-acid biosynthesis</keyword>
<keyword id="KW-0057">Aromatic amino acid biosynthesis</keyword>
<keyword id="KW-0315">Glutamine amidotransferase</keyword>
<keyword id="KW-0456">Lyase</keyword>
<keyword id="KW-0822">Tryptophan biosynthesis</keyword>
<comment type="function">
    <text evidence="1 4">Part of a heterotetrameric complex that catalyzes the two-step biosynthesis of anthranilate, an intermediate in the biosynthesis of L-tryptophan. In the first step, the glutamine-binding beta subunit (TrpG) of anthranilate synthase (AS) provides the glutamine amidotransferase activity which generates ammonia as a substrate that, along with chorismate, is used in the second step, catalyzed by the large alpha subunit of AS (TrpE) to produce anthranilate. In the absence of TrpG, TrpE can synthesize anthranilate directly from chorismate and high concentrations of ammonia (By similarity). Participates in the tryptophan-dependent indole-3-acetic acid production, which is a phytohormone released by A.brasilense.</text>
</comment>
<comment type="catalytic activity">
    <reaction>
        <text>chorismate + L-glutamine = anthranilate + pyruvate + L-glutamate + H(+)</text>
        <dbReference type="Rhea" id="RHEA:21732"/>
        <dbReference type="ChEBI" id="CHEBI:15361"/>
        <dbReference type="ChEBI" id="CHEBI:15378"/>
        <dbReference type="ChEBI" id="CHEBI:16567"/>
        <dbReference type="ChEBI" id="CHEBI:29748"/>
        <dbReference type="ChEBI" id="CHEBI:29985"/>
        <dbReference type="ChEBI" id="CHEBI:58359"/>
        <dbReference type="EC" id="4.1.3.27"/>
    </reaction>
</comment>
<comment type="pathway">
    <text>Amino-acid biosynthesis; L-tryptophan biosynthesis; L-tryptophan from chorismate: step 1/5.</text>
</comment>
<comment type="subunit">
    <text evidence="1">Heterotetramer consisting of two non-identical subunits: a beta subunit (TrpG) and a large alpha subunit (TrpE).</text>
</comment>
<protein>
    <recommendedName>
        <fullName>Anthranilate synthase component 2</fullName>
        <shortName>AS</shortName>
        <shortName>ASII</shortName>
        <ecNumber>4.1.3.27</ecNumber>
    </recommendedName>
    <alternativeName>
        <fullName>Anthranilate synthase, GATase component</fullName>
    </alternativeName>
    <alternativeName>
        <fullName>Anthranilate synthase, glutamine amidotransferase component</fullName>
    </alternativeName>
</protein>
<dbReference type="EC" id="4.1.3.27"/>
<dbReference type="EMBL" id="X57853">
    <property type="protein sequence ID" value="CAA40984.1"/>
    <property type="molecule type" value="Genomic_DNA"/>
</dbReference>
<dbReference type="PIR" id="S17703">
    <property type="entry name" value="S17703"/>
</dbReference>
<dbReference type="SMR" id="P26922"/>
<dbReference type="MEROPS" id="C26.955"/>
<dbReference type="UniPathway" id="UPA00035">
    <property type="reaction ID" value="UER00040"/>
</dbReference>
<dbReference type="GO" id="GO:0005829">
    <property type="term" value="C:cytosol"/>
    <property type="evidence" value="ECO:0007669"/>
    <property type="project" value="TreeGrafter"/>
</dbReference>
<dbReference type="GO" id="GO:0004049">
    <property type="term" value="F:anthranilate synthase activity"/>
    <property type="evidence" value="ECO:0007669"/>
    <property type="project" value="UniProtKB-EC"/>
</dbReference>
<dbReference type="GO" id="GO:0000162">
    <property type="term" value="P:L-tryptophan biosynthetic process"/>
    <property type="evidence" value="ECO:0007669"/>
    <property type="project" value="UniProtKB-UniPathway"/>
</dbReference>
<dbReference type="CDD" id="cd01743">
    <property type="entry name" value="GATase1_Anthranilate_Synthase"/>
    <property type="match status" value="1"/>
</dbReference>
<dbReference type="FunFam" id="3.40.50.880:FF:000003">
    <property type="entry name" value="Anthranilate synthase component II"/>
    <property type="match status" value="1"/>
</dbReference>
<dbReference type="Gene3D" id="3.40.50.880">
    <property type="match status" value="1"/>
</dbReference>
<dbReference type="InterPro" id="IPR050472">
    <property type="entry name" value="Anth_synth/Amidotransfase"/>
</dbReference>
<dbReference type="InterPro" id="IPR029062">
    <property type="entry name" value="Class_I_gatase-like"/>
</dbReference>
<dbReference type="InterPro" id="IPR017926">
    <property type="entry name" value="GATASE"/>
</dbReference>
<dbReference type="InterPro" id="IPR006221">
    <property type="entry name" value="TrpG/PapA_dom"/>
</dbReference>
<dbReference type="NCBIfam" id="TIGR00566">
    <property type="entry name" value="trpG_papA"/>
    <property type="match status" value="1"/>
</dbReference>
<dbReference type="PANTHER" id="PTHR43418:SF4">
    <property type="entry name" value="MULTIFUNCTIONAL TRYPTOPHAN BIOSYNTHESIS PROTEIN"/>
    <property type="match status" value="1"/>
</dbReference>
<dbReference type="PANTHER" id="PTHR43418">
    <property type="entry name" value="MULTIFUNCTIONAL TRYPTOPHAN BIOSYNTHESIS PROTEIN-RELATED"/>
    <property type="match status" value="1"/>
</dbReference>
<dbReference type="Pfam" id="PF00117">
    <property type="entry name" value="GATase"/>
    <property type="match status" value="1"/>
</dbReference>
<dbReference type="PRINTS" id="PR00097">
    <property type="entry name" value="ANTSNTHASEII"/>
</dbReference>
<dbReference type="PRINTS" id="PR00099">
    <property type="entry name" value="CPSGATASE"/>
</dbReference>
<dbReference type="PRINTS" id="PR00096">
    <property type="entry name" value="GATASE"/>
</dbReference>
<dbReference type="SUPFAM" id="SSF52317">
    <property type="entry name" value="Class I glutamine amidotransferase-like"/>
    <property type="match status" value="1"/>
</dbReference>
<dbReference type="PROSITE" id="PS51273">
    <property type="entry name" value="GATASE_TYPE_1"/>
    <property type="match status" value="1"/>
</dbReference>
<accession>P26922</accession>
<organism>
    <name type="scientific">Azospirillum brasilense</name>
    <dbReference type="NCBI Taxonomy" id="192"/>
    <lineage>
        <taxon>Bacteria</taxon>
        <taxon>Pseudomonadati</taxon>
        <taxon>Pseudomonadota</taxon>
        <taxon>Alphaproteobacteria</taxon>
        <taxon>Rhodospirillales</taxon>
        <taxon>Azospirillaceae</taxon>
        <taxon>Azospirillum</taxon>
    </lineage>
</organism>
<evidence type="ECO:0000250" key="1"/>
<evidence type="ECO:0000250" key="2">
    <source>
        <dbReference type="UniProtKB" id="P00900"/>
    </source>
</evidence>
<evidence type="ECO:0000255" key="3">
    <source>
        <dbReference type="PROSITE-ProRule" id="PRU00605"/>
    </source>
</evidence>
<evidence type="ECO:0000269" key="4">
    <source>
    </source>
</evidence>
<gene>
    <name type="primary">trpG</name>
</gene>
<feature type="chain" id="PRO_0000056871" description="Anthranilate synthase component 2">
    <location>
        <begin position="1"/>
        <end position="196"/>
    </location>
</feature>
<feature type="domain" description="Glutamine amidotransferase type-1" evidence="3">
    <location>
        <begin position="1"/>
        <end position="195"/>
    </location>
</feature>
<feature type="active site" description="Nucleophile; for GATase activity" evidence="3">
    <location>
        <position position="80"/>
    </location>
</feature>
<feature type="active site" description="For GATase activity" evidence="3">
    <location>
        <position position="169"/>
    </location>
</feature>
<feature type="active site" description="For GATase activity" evidence="3">
    <location>
        <position position="171"/>
    </location>
</feature>
<feature type="binding site" evidence="2">
    <location>
        <begin position="52"/>
        <end position="54"/>
    </location>
    <ligand>
        <name>L-glutamine</name>
        <dbReference type="ChEBI" id="CHEBI:58359"/>
    </ligand>
</feature>
<feature type="binding site" evidence="2">
    <location>
        <position position="84"/>
    </location>
    <ligand>
        <name>L-glutamine</name>
        <dbReference type="ChEBI" id="CHEBI:58359"/>
    </ligand>
</feature>
<feature type="binding site" evidence="2">
    <location>
        <begin position="130"/>
        <end position="131"/>
    </location>
    <ligand>
        <name>L-glutamine</name>
        <dbReference type="ChEBI" id="CHEBI:58359"/>
    </ligand>
</feature>
<proteinExistence type="evidence at protein level"/>
<reference key="1">
    <citation type="journal article" date="1991" name="Mol. Gen. Genet.">
        <title>Relationship between tryptophan biosynthesis and indole-3-acetic acid production in Azospirillum: identification and sequencing of a trpGDC cluster.</title>
        <authorList>
            <person name="Zimmer W."/>
            <person name="Aparicio C."/>
            <person name="Elmerich C."/>
        </authorList>
    </citation>
    <scope>NUCLEOTIDE SEQUENCE [GENOMIC DNA]</scope>
    <scope>FUNCTION IN INDOLE-3-ACETIC ACID</scope>
    <source>
        <strain>ATCC 29145 / DSM 1690 / IMET 11303 / Sp7</strain>
    </source>
</reference>
<sequence>MLLLIDNYDSFTYNLVHYLGELGAELDVRRNDSLTVEEAMALRPEGIVLSPGPCDPDKAGICLPLIDAAAKAAVPLMGVCLGHQAIGQPFGGTVVRAPVPMHGKVDRMFHQGRGVLKDLPSPFRATRYHSLIVERATLPACLEVTGETEDGLIMALSHRELPIHGVQFHPESIESEHGHKILENFLNTTRRLETAA</sequence>
<name>TRPG_AZOBR</name>